<evidence type="ECO:0000255" key="1">
    <source>
        <dbReference type="HAMAP-Rule" id="MF_00254"/>
    </source>
</evidence>
<feature type="chain" id="PRO_1000101179" description="Glycine--tRNA ligase alpha subunit">
    <location>
        <begin position="1"/>
        <end position="319"/>
    </location>
</feature>
<accession>B6J2A7</accession>
<reference key="1">
    <citation type="journal article" date="2009" name="Infect. Immun.">
        <title>Comparative genomics reveal extensive transposon-mediated genomic plasticity and diversity among potential effector proteins within the genus Coxiella.</title>
        <authorList>
            <person name="Beare P.A."/>
            <person name="Unsworth N."/>
            <person name="Andoh M."/>
            <person name="Voth D.E."/>
            <person name="Omsland A."/>
            <person name="Gilk S.D."/>
            <person name="Williams K.P."/>
            <person name="Sobral B.W."/>
            <person name="Kupko J.J. III"/>
            <person name="Porcella S.F."/>
            <person name="Samuel J.E."/>
            <person name="Heinzen R.A."/>
        </authorList>
    </citation>
    <scope>NUCLEOTIDE SEQUENCE [LARGE SCALE GENOMIC DNA]</scope>
    <source>
        <strain>CbuG_Q212</strain>
    </source>
</reference>
<protein>
    <recommendedName>
        <fullName evidence="1">Glycine--tRNA ligase alpha subunit</fullName>
        <ecNumber evidence="1">6.1.1.14</ecNumber>
    </recommendedName>
    <alternativeName>
        <fullName evidence="1">Glycyl-tRNA synthetase alpha subunit</fullName>
        <shortName evidence="1">GlyRS</shortName>
    </alternativeName>
</protein>
<keyword id="KW-0030">Aminoacyl-tRNA synthetase</keyword>
<keyword id="KW-0067">ATP-binding</keyword>
<keyword id="KW-0963">Cytoplasm</keyword>
<keyword id="KW-0436">Ligase</keyword>
<keyword id="KW-0547">Nucleotide-binding</keyword>
<keyword id="KW-0648">Protein biosynthesis</keyword>
<comment type="catalytic activity">
    <reaction evidence="1">
        <text>tRNA(Gly) + glycine + ATP = glycyl-tRNA(Gly) + AMP + diphosphate</text>
        <dbReference type="Rhea" id="RHEA:16013"/>
        <dbReference type="Rhea" id="RHEA-COMP:9664"/>
        <dbReference type="Rhea" id="RHEA-COMP:9683"/>
        <dbReference type="ChEBI" id="CHEBI:30616"/>
        <dbReference type="ChEBI" id="CHEBI:33019"/>
        <dbReference type="ChEBI" id="CHEBI:57305"/>
        <dbReference type="ChEBI" id="CHEBI:78442"/>
        <dbReference type="ChEBI" id="CHEBI:78522"/>
        <dbReference type="ChEBI" id="CHEBI:456215"/>
        <dbReference type="EC" id="6.1.1.14"/>
    </reaction>
</comment>
<comment type="subunit">
    <text evidence="1">Tetramer of two alpha and two beta subunits.</text>
</comment>
<comment type="subcellular location">
    <subcellularLocation>
        <location evidence="1">Cytoplasm</location>
    </subcellularLocation>
</comment>
<comment type="similarity">
    <text evidence="1">Belongs to the class-II aminoacyl-tRNA synthetase family.</text>
</comment>
<proteinExistence type="inferred from homology"/>
<gene>
    <name evidence="1" type="primary">glyQ</name>
    <name type="ordered locus">CbuG_0022</name>
</gene>
<name>SYGA_COXB2</name>
<sequence length="319" mass="36397">MKSSHPVNFQQMILALQEYWASQGCVLLQPFDMEVGAGTFHPATFLRAIGPEPWRAAYVQPSRRPTDGRYGDNPNRTQHYYQFQVVLKPSPDDIQDIYLGSLKALGIDPLTHDIRFVEDNWEAPTLGSWGVGWEVWQDGMEITQFTYFQQIGGLECKPVTGEITYGLERLAMFLQGIDNMFDLVWTEGPNGRVTYGQIFQQNEVEMSAYNFEYANVEALFNFFDFYEKEASQLIEVHLPLAAYEMVLKASHTFNLLDARQAISVTERQRFILRVRKLAQAVAEAYYSAREKLGFPMLEEISSSSSRVLPLAGNDRVKGC</sequence>
<dbReference type="EC" id="6.1.1.14" evidence="1"/>
<dbReference type="EMBL" id="CP001019">
    <property type="protein sequence ID" value="ACJ17481.1"/>
    <property type="molecule type" value="Genomic_DNA"/>
</dbReference>
<dbReference type="RefSeq" id="WP_005769976.1">
    <property type="nucleotide sequence ID" value="NC_011527.1"/>
</dbReference>
<dbReference type="SMR" id="B6J2A7"/>
<dbReference type="KEGG" id="cbg:CbuG_0022"/>
<dbReference type="HOGENOM" id="CLU_057066_1_0_6"/>
<dbReference type="GO" id="GO:0005829">
    <property type="term" value="C:cytosol"/>
    <property type="evidence" value="ECO:0007669"/>
    <property type="project" value="TreeGrafter"/>
</dbReference>
<dbReference type="GO" id="GO:0005524">
    <property type="term" value="F:ATP binding"/>
    <property type="evidence" value="ECO:0007669"/>
    <property type="project" value="UniProtKB-UniRule"/>
</dbReference>
<dbReference type="GO" id="GO:0004820">
    <property type="term" value="F:glycine-tRNA ligase activity"/>
    <property type="evidence" value="ECO:0007669"/>
    <property type="project" value="UniProtKB-UniRule"/>
</dbReference>
<dbReference type="GO" id="GO:0006426">
    <property type="term" value="P:glycyl-tRNA aminoacylation"/>
    <property type="evidence" value="ECO:0007669"/>
    <property type="project" value="UniProtKB-UniRule"/>
</dbReference>
<dbReference type="CDD" id="cd00733">
    <property type="entry name" value="GlyRS_alpha_core"/>
    <property type="match status" value="1"/>
</dbReference>
<dbReference type="FunFam" id="3.30.930.10:FF:000006">
    <property type="entry name" value="Glycine--tRNA ligase alpha subunit"/>
    <property type="match status" value="1"/>
</dbReference>
<dbReference type="Gene3D" id="3.30.930.10">
    <property type="entry name" value="Bira Bifunctional Protein, Domain 2"/>
    <property type="match status" value="1"/>
</dbReference>
<dbReference type="Gene3D" id="1.20.58.180">
    <property type="entry name" value="Class II aaRS and biotin synthetases, domain 2"/>
    <property type="match status" value="1"/>
</dbReference>
<dbReference type="HAMAP" id="MF_00254">
    <property type="entry name" value="Gly_tRNA_synth_alpha"/>
    <property type="match status" value="1"/>
</dbReference>
<dbReference type="InterPro" id="IPR045864">
    <property type="entry name" value="aa-tRNA-synth_II/BPL/LPL"/>
</dbReference>
<dbReference type="InterPro" id="IPR006194">
    <property type="entry name" value="Gly-tRNA-synth_heterodimer"/>
</dbReference>
<dbReference type="InterPro" id="IPR002310">
    <property type="entry name" value="Gly-tRNA_ligase_asu"/>
</dbReference>
<dbReference type="NCBIfam" id="TIGR00388">
    <property type="entry name" value="glyQ"/>
    <property type="match status" value="1"/>
</dbReference>
<dbReference type="NCBIfam" id="NF006827">
    <property type="entry name" value="PRK09348.1"/>
    <property type="match status" value="1"/>
</dbReference>
<dbReference type="PANTHER" id="PTHR30075:SF2">
    <property type="entry name" value="GLYCINE--TRNA LIGASE, CHLOROPLASTIC_MITOCHONDRIAL 2"/>
    <property type="match status" value="1"/>
</dbReference>
<dbReference type="PANTHER" id="PTHR30075">
    <property type="entry name" value="GLYCYL-TRNA SYNTHETASE"/>
    <property type="match status" value="1"/>
</dbReference>
<dbReference type="Pfam" id="PF02091">
    <property type="entry name" value="tRNA-synt_2e"/>
    <property type="match status" value="1"/>
</dbReference>
<dbReference type="PRINTS" id="PR01044">
    <property type="entry name" value="TRNASYNTHGA"/>
</dbReference>
<dbReference type="SUPFAM" id="SSF55681">
    <property type="entry name" value="Class II aaRS and biotin synthetases"/>
    <property type="match status" value="1"/>
</dbReference>
<dbReference type="PROSITE" id="PS50861">
    <property type="entry name" value="AA_TRNA_LIGASE_II_GLYAB"/>
    <property type="match status" value="1"/>
</dbReference>
<organism>
    <name type="scientific">Coxiella burnetii (strain CbuG_Q212)</name>
    <name type="common">Coxiella burnetii (strain Q212)</name>
    <dbReference type="NCBI Taxonomy" id="434923"/>
    <lineage>
        <taxon>Bacteria</taxon>
        <taxon>Pseudomonadati</taxon>
        <taxon>Pseudomonadota</taxon>
        <taxon>Gammaproteobacteria</taxon>
        <taxon>Legionellales</taxon>
        <taxon>Coxiellaceae</taxon>
        <taxon>Coxiella</taxon>
    </lineage>
</organism>